<name>GLUQ_NITV2</name>
<reference key="1">
    <citation type="journal article" date="2004" name="Nat. Biotechnol.">
        <title>The genome sequence of the anaerobic, sulfate-reducing bacterium Desulfovibrio vulgaris Hildenborough.</title>
        <authorList>
            <person name="Heidelberg J.F."/>
            <person name="Seshadri R."/>
            <person name="Haveman S.A."/>
            <person name="Hemme C.L."/>
            <person name="Paulsen I.T."/>
            <person name="Kolonay J.F."/>
            <person name="Eisen J.A."/>
            <person name="Ward N.L."/>
            <person name="Methe B.A."/>
            <person name="Brinkac L.M."/>
            <person name="Daugherty S.C."/>
            <person name="DeBoy R.T."/>
            <person name="Dodson R.J."/>
            <person name="Durkin A.S."/>
            <person name="Madupu R."/>
            <person name="Nelson W.C."/>
            <person name="Sullivan S.A."/>
            <person name="Fouts D.E."/>
            <person name="Haft D.H."/>
            <person name="Selengut J."/>
            <person name="Peterson J.D."/>
            <person name="Davidsen T.M."/>
            <person name="Zafar N."/>
            <person name="Zhou L."/>
            <person name="Radune D."/>
            <person name="Dimitrov G."/>
            <person name="Hance M."/>
            <person name="Tran K."/>
            <person name="Khouri H.M."/>
            <person name="Gill J."/>
            <person name="Utterback T.R."/>
            <person name="Feldblyum T.V."/>
            <person name="Wall J.D."/>
            <person name="Voordouw G."/>
            <person name="Fraser C.M."/>
        </authorList>
    </citation>
    <scope>NUCLEOTIDE SEQUENCE [LARGE SCALE GENOMIC DNA]</scope>
    <source>
        <strain>ATCC 29579 / DSM 644 / CCUG 34227 / NCIMB 8303 / VKM B-1760 / Hildenborough</strain>
    </source>
</reference>
<keyword id="KW-0030">Aminoacyl-tRNA synthetase</keyword>
<keyword id="KW-0067">ATP-binding</keyword>
<keyword id="KW-0436">Ligase</keyword>
<keyword id="KW-0479">Metal-binding</keyword>
<keyword id="KW-0547">Nucleotide-binding</keyword>
<keyword id="KW-1185">Reference proteome</keyword>
<keyword id="KW-0862">Zinc</keyword>
<accession>Q72BE3</accession>
<proteinExistence type="inferred from homology"/>
<gene>
    <name evidence="1" type="primary">gluQ</name>
    <name type="ordered locus">DVU_1693</name>
</gene>
<protein>
    <recommendedName>
        <fullName evidence="1">Glutamyl-Q tRNA(Asp) synthetase</fullName>
        <shortName evidence="1">Glu-Q-RSs</shortName>
        <ecNumber evidence="1">6.1.1.-</ecNumber>
    </recommendedName>
</protein>
<comment type="function">
    <text evidence="1">Catalyzes the tRNA-independent activation of glutamate in presence of ATP and the subsequent transfer of glutamate onto a tRNA(Asp). Glutamate is transferred on the 2-amino-5-(4,5-dihydroxy-2-cyclopenten-1-yl) moiety of the queuosine in the wobble position of the QUC anticodon.</text>
</comment>
<comment type="cofactor">
    <cofactor evidence="1">
        <name>Zn(2+)</name>
        <dbReference type="ChEBI" id="CHEBI:29105"/>
    </cofactor>
    <text evidence="1">Binds 1 zinc ion per subunit.</text>
</comment>
<comment type="similarity">
    <text evidence="1">Belongs to the class-I aminoacyl-tRNA synthetase family. GluQ subfamily.</text>
</comment>
<organism>
    <name type="scientific">Nitratidesulfovibrio vulgaris (strain ATCC 29579 / DSM 644 / CCUG 34227 / NCIMB 8303 / VKM B-1760 / Hildenborough)</name>
    <name type="common">Desulfovibrio vulgaris</name>
    <dbReference type="NCBI Taxonomy" id="882"/>
    <lineage>
        <taxon>Bacteria</taxon>
        <taxon>Pseudomonadati</taxon>
        <taxon>Thermodesulfobacteriota</taxon>
        <taxon>Desulfovibrionia</taxon>
        <taxon>Desulfovibrionales</taxon>
        <taxon>Desulfovibrionaceae</taxon>
        <taxon>Nitratidesulfovibrio</taxon>
    </lineage>
</organism>
<sequence>MIRGRLAPSPTGNIHLGNAWAFMLAWLAARQAGGKVLLRMEDIDPDRARPEYAEGIMADLRWLGLDWDEGPDIGGPCGPYVQSRRVQDYARVLDVLATLGAVYPCYCTRKELRTLAGAPHPGDLGAPYPGTCRNLTIEECSRKEKEGRRPAMRLRWPDGVFAFDDGLFGPQQAGGESCGGDFALRRSDGVFAYQLAVVVDDIAMGVTQVVRGADLLSCTPRQLALYSLLGAQPPAYLHVPLLLDATGERLAKRHQSLEIRALRNAGVPAANITGYLAMLAGMIPDFVPRAPKDCVGLLSTATLPTRPLVTPADILDRLKKGTSR</sequence>
<dbReference type="EC" id="6.1.1.-" evidence="1"/>
<dbReference type="EMBL" id="AE017285">
    <property type="protein sequence ID" value="AAS96170.1"/>
    <property type="molecule type" value="Genomic_DNA"/>
</dbReference>
<dbReference type="RefSeq" id="YP_010911.1">
    <property type="nucleotide sequence ID" value="NC_002937.3"/>
</dbReference>
<dbReference type="SMR" id="Q72BE3"/>
<dbReference type="STRING" id="882.DVU_1693"/>
<dbReference type="PaxDb" id="882-DVU_1693"/>
<dbReference type="EnsemblBacteria" id="AAS96170">
    <property type="protein sequence ID" value="AAS96170"/>
    <property type="gene ID" value="DVU_1693"/>
</dbReference>
<dbReference type="KEGG" id="dvu:DVU_1693"/>
<dbReference type="PATRIC" id="fig|882.5.peg.1563"/>
<dbReference type="eggNOG" id="COG0008">
    <property type="taxonomic scope" value="Bacteria"/>
</dbReference>
<dbReference type="HOGENOM" id="CLU_015768_0_0_7"/>
<dbReference type="OrthoDB" id="9807503at2"/>
<dbReference type="PhylomeDB" id="Q72BE3"/>
<dbReference type="Proteomes" id="UP000002194">
    <property type="component" value="Chromosome"/>
</dbReference>
<dbReference type="GO" id="GO:0005829">
    <property type="term" value="C:cytosol"/>
    <property type="evidence" value="ECO:0007669"/>
    <property type="project" value="TreeGrafter"/>
</dbReference>
<dbReference type="GO" id="GO:0005524">
    <property type="term" value="F:ATP binding"/>
    <property type="evidence" value="ECO:0007669"/>
    <property type="project" value="UniProtKB-KW"/>
</dbReference>
<dbReference type="GO" id="GO:0004818">
    <property type="term" value="F:glutamate-tRNA ligase activity"/>
    <property type="evidence" value="ECO:0007669"/>
    <property type="project" value="TreeGrafter"/>
</dbReference>
<dbReference type="GO" id="GO:0008270">
    <property type="term" value="F:zinc ion binding"/>
    <property type="evidence" value="ECO:0007669"/>
    <property type="project" value="UniProtKB-UniRule"/>
</dbReference>
<dbReference type="GO" id="GO:0006424">
    <property type="term" value="P:glutamyl-tRNA aminoacylation"/>
    <property type="evidence" value="ECO:0007669"/>
    <property type="project" value="InterPro"/>
</dbReference>
<dbReference type="GO" id="GO:0006400">
    <property type="term" value="P:tRNA modification"/>
    <property type="evidence" value="ECO:0007669"/>
    <property type="project" value="InterPro"/>
</dbReference>
<dbReference type="Gene3D" id="3.40.50.620">
    <property type="entry name" value="HUPs"/>
    <property type="match status" value="1"/>
</dbReference>
<dbReference type="HAMAP" id="MF_01428">
    <property type="entry name" value="Glu_Q_tRNA_synth"/>
    <property type="match status" value="1"/>
</dbReference>
<dbReference type="InterPro" id="IPR001412">
    <property type="entry name" value="aa-tRNA-synth_I_CS"/>
</dbReference>
<dbReference type="InterPro" id="IPR022380">
    <property type="entry name" value="Glu-Q_tRNA(Asp)_Synthase"/>
</dbReference>
<dbReference type="InterPro" id="IPR000924">
    <property type="entry name" value="Glu/Gln-tRNA-synth"/>
</dbReference>
<dbReference type="InterPro" id="IPR020058">
    <property type="entry name" value="Glu/Gln-tRNA-synth_Ib_cat-dom"/>
</dbReference>
<dbReference type="InterPro" id="IPR049940">
    <property type="entry name" value="GluQ/Sye"/>
</dbReference>
<dbReference type="InterPro" id="IPR014729">
    <property type="entry name" value="Rossmann-like_a/b/a_fold"/>
</dbReference>
<dbReference type="NCBIfam" id="NF004314">
    <property type="entry name" value="PRK05710.1-3"/>
    <property type="match status" value="1"/>
</dbReference>
<dbReference type="NCBIfam" id="NF004315">
    <property type="entry name" value="PRK05710.1-4"/>
    <property type="match status" value="1"/>
</dbReference>
<dbReference type="NCBIfam" id="TIGR03838">
    <property type="entry name" value="queuosine_YadB"/>
    <property type="match status" value="1"/>
</dbReference>
<dbReference type="PANTHER" id="PTHR43311">
    <property type="entry name" value="GLUTAMATE--TRNA LIGASE"/>
    <property type="match status" value="1"/>
</dbReference>
<dbReference type="PANTHER" id="PTHR43311:SF1">
    <property type="entry name" value="GLUTAMYL-Q TRNA(ASP) SYNTHETASE"/>
    <property type="match status" value="1"/>
</dbReference>
<dbReference type="Pfam" id="PF00749">
    <property type="entry name" value="tRNA-synt_1c"/>
    <property type="match status" value="1"/>
</dbReference>
<dbReference type="PRINTS" id="PR00987">
    <property type="entry name" value="TRNASYNTHGLU"/>
</dbReference>
<dbReference type="SUPFAM" id="SSF52374">
    <property type="entry name" value="Nucleotidylyl transferase"/>
    <property type="match status" value="1"/>
</dbReference>
<dbReference type="PROSITE" id="PS00178">
    <property type="entry name" value="AA_TRNA_LIGASE_I"/>
    <property type="match status" value="1"/>
</dbReference>
<evidence type="ECO:0000255" key="1">
    <source>
        <dbReference type="HAMAP-Rule" id="MF_01428"/>
    </source>
</evidence>
<feature type="chain" id="PRO_0000208298" description="Glutamyl-Q tRNA(Asp) synthetase">
    <location>
        <begin position="1"/>
        <end position="324"/>
    </location>
</feature>
<feature type="short sequence motif" description="'HIGH' region">
    <location>
        <begin position="8"/>
        <end position="18"/>
    </location>
</feature>
<feature type="short sequence motif" description="'KMSKS' region">
    <location>
        <begin position="249"/>
        <end position="253"/>
    </location>
</feature>
<feature type="binding site" evidence="1">
    <location>
        <begin position="5"/>
        <end position="9"/>
    </location>
    <ligand>
        <name>L-glutamate</name>
        <dbReference type="ChEBI" id="CHEBI:29985"/>
    </ligand>
</feature>
<feature type="binding site" evidence="1">
    <location>
        <position position="41"/>
    </location>
    <ligand>
        <name>L-glutamate</name>
        <dbReference type="ChEBI" id="CHEBI:29985"/>
    </ligand>
</feature>
<feature type="binding site" evidence="1">
    <location>
        <position position="105"/>
    </location>
    <ligand>
        <name>Zn(2+)</name>
        <dbReference type="ChEBI" id="CHEBI:29105"/>
    </ligand>
</feature>
<feature type="binding site" evidence="1">
    <location>
        <position position="107"/>
    </location>
    <ligand>
        <name>Zn(2+)</name>
        <dbReference type="ChEBI" id="CHEBI:29105"/>
    </ligand>
</feature>
<feature type="binding site" evidence="1">
    <location>
        <position position="128"/>
    </location>
    <ligand>
        <name>Zn(2+)</name>
        <dbReference type="ChEBI" id="CHEBI:29105"/>
    </ligand>
</feature>
<feature type="binding site" evidence="1">
    <location>
        <position position="132"/>
    </location>
    <ligand>
        <name>Zn(2+)</name>
        <dbReference type="ChEBI" id="CHEBI:29105"/>
    </ligand>
</feature>
<feature type="binding site" evidence="1">
    <location>
        <position position="193"/>
    </location>
    <ligand>
        <name>L-glutamate</name>
        <dbReference type="ChEBI" id="CHEBI:29985"/>
    </ligand>
</feature>
<feature type="binding site" evidence="1">
    <location>
        <position position="211"/>
    </location>
    <ligand>
        <name>L-glutamate</name>
        <dbReference type="ChEBI" id="CHEBI:29985"/>
    </ligand>
</feature>
<feature type="binding site" evidence="1">
    <location>
        <position position="252"/>
    </location>
    <ligand>
        <name>ATP</name>
        <dbReference type="ChEBI" id="CHEBI:30616"/>
    </ligand>
</feature>